<comment type="catalytic activity">
    <reaction evidence="1">
        <text>beta-D-fructose 1,6-bisphosphate + H2O = beta-D-fructose 6-phosphate + phosphate</text>
        <dbReference type="Rhea" id="RHEA:11064"/>
        <dbReference type="ChEBI" id="CHEBI:15377"/>
        <dbReference type="ChEBI" id="CHEBI:32966"/>
        <dbReference type="ChEBI" id="CHEBI:43474"/>
        <dbReference type="ChEBI" id="CHEBI:57634"/>
        <dbReference type="EC" id="3.1.3.11"/>
    </reaction>
</comment>
<comment type="cofactor">
    <cofactor evidence="1">
        <name>Mg(2+)</name>
        <dbReference type="ChEBI" id="CHEBI:18420"/>
    </cofactor>
    <text evidence="1">Binds 2 magnesium ions per subunit.</text>
</comment>
<comment type="pathway">
    <text evidence="1">Carbohydrate biosynthesis; gluconeogenesis.</text>
</comment>
<comment type="subunit">
    <text evidence="1">Homotetramer.</text>
</comment>
<comment type="subcellular location">
    <subcellularLocation>
        <location evidence="1">Cytoplasm</location>
    </subcellularLocation>
</comment>
<comment type="similarity">
    <text evidence="1">Belongs to the FBPase class 1 family.</text>
</comment>
<comment type="sequence caution" evidence="2">
    <conflict type="erroneous initiation">
        <sequence resource="EMBL-CDS" id="AAN83750"/>
    </conflict>
</comment>
<keyword id="KW-0119">Carbohydrate metabolism</keyword>
<keyword id="KW-0963">Cytoplasm</keyword>
<keyword id="KW-0378">Hydrolase</keyword>
<keyword id="KW-0460">Magnesium</keyword>
<keyword id="KW-0479">Metal-binding</keyword>
<keyword id="KW-1185">Reference proteome</keyword>
<reference key="1">
    <citation type="journal article" date="2002" name="Proc. Natl. Acad. Sci. U.S.A.">
        <title>Extensive mosaic structure revealed by the complete genome sequence of uropathogenic Escherichia coli.</title>
        <authorList>
            <person name="Welch R.A."/>
            <person name="Burland V."/>
            <person name="Plunkett G. III"/>
            <person name="Redford P."/>
            <person name="Roesch P."/>
            <person name="Rasko D."/>
            <person name="Buckles E.L."/>
            <person name="Liou S.-R."/>
            <person name="Boutin A."/>
            <person name="Hackett J."/>
            <person name="Stroud D."/>
            <person name="Mayhew G.F."/>
            <person name="Rose D.J."/>
            <person name="Zhou S."/>
            <person name="Schwartz D.C."/>
            <person name="Perna N.T."/>
            <person name="Mobley H.L.T."/>
            <person name="Donnenberg M.S."/>
            <person name="Blattner F.R."/>
        </authorList>
    </citation>
    <scope>NUCLEOTIDE SEQUENCE [LARGE SCALE GENOMIC DNA]</scope>
    <source>
        <strain>CFT073 / ATCC 700928 / UPEC</strain>
    </source>
</reference>
<accession>P0A994</accession>
<accession>P09200</accession>
<protein>
    <recommendedName>
        <fullName evidence="1">Fructose-1,6-bisphosphatase class 1</fullName>
        <shortName evidence="1">FBPase class 1</shortName>
        <ecNumber evidence="1">3.1.3.11</ecNumber>
    </recommendedName>
    <alternativeName>
        <fullName evidence="1">D-fructose-1,6-bisphosphate 1-phosphohydrolase class 1</fullName>
    </alternativeName>
</protein>
<evidence type="ECO:0000255" key="1">
    <source>
        <dbReference type="HAMAP-Rule" id="MF_01855"/>
    </source>
</evidence>
<evidence type="ECO:0000305" key="2"/>
<gene>
    <name evidence="1" type="primary">fbp</name>
    <name type="ordered locus">c5329</name>
</gene>
<proteinExistence type="inferred from homology"/>
<organism>
    <name type="scientific">Escherichia coli O6:H1 (strain CFT073 / ATCC 700928 / UPEC)</name>
    <dbReference type="NCBI Taxonomy" id="199310"/>
    <lineage>
        <taxon>Bacteria</taxon>
        <taxon>Pseudomonadati</taxon>
        <taxon>Pseudomonadota</taxon>
        <taxon>Gammaproteobacteria</taxon>
        <taxon>Enterobacterales</taxon>
        <taxon>Enterobacteriaceae</taxon>
        <taxon>Escherichia</taxon>
    </lineage>
</organism>
<sequence>MKTLGEFIVEKQHEFSHATGELTALLSAIKLGAKIIHRDINKAGLVDILGASGAENVQGEVQQKLDLFANEKLKAALKARDIVAGIASEEEDEIVVFEGCEHAKYVVLMDPLDGSSNIDVNVSVGTIFSIYRRVTPVGTPVTEEDFLQPGNKQVAAGYVVYGSSTMLVYTTGCGVHAFTYDPSLGVFCLCQERMRFPEKGKTYSINEGNYIKFPNGVKKYIKFCQEEDKSTNRPYTSRYIGSLVADFHRNLLKGGIYLYPSTASHPDGKLRLLYECNPMAFLAEQAGGKASDGKERILDIIPETLHQRRSFFVGNDHMVEDVERFIREFPDA</sequence>
<feature type="chain" id="PRO_0000200493" description="Fructose-1,6-bisphosphatase class 1">
    <location>
        <begin position="1"/>
        <end position="332"/>
    </location>
</feature>
<feature type="binding site" evidence="1">
    <location>
        <position position="89"/>
    </location>
    <ligand>
        <name>Mg(2+)</name>
        <dbReference type="ChEBI" id="CHEBI:18420"/>
        <label>1</label>
    </ligand>
</feature>
<feature type="binding site" evidence="1">
    <location>
        <position position="110"/>
    </location>
    <ligand>
        <name>Mg(2+)</name>
        <dbReference type="ChEBI" id="CHEBI:18420"/>
        <label>1</label>
    </ligand>
</feature>
<feature type="binding site" evidence="1">
    <location>
        <position position="110"/>
    </location>
    <ligand>
        <name>Mg(2+)</name>
        <dbReference type="ChEBI" id="CHEBI:18420"/>
        <label>2</label>
    </ligand>
</feature>
<feature type="binding site" evidence="1">
    <location>
        <position position="112"/>
    </location>
    <ligand>
        <name>Mg(2+)</name>
        <dbReference type="ChEBI" id="CHEBI:18420"/>
        <label>1</label>
    </ligand>
</feature>
<feature type="binding site" evidence="1">
    <location>
        <begin position="113"/>
        <end position="116"/>
    </location>
    <ligand>
        <name>substrate</name>
    </ligand>
</feature>
<feature type="binding site" evidence="1">
    <location>
        <position position="113"/>
    </location>
    <ligand>
        <name>Mg(2+)</name>
        <dbReference type="ChEBI" id="CHEBI:18420"/>
        <label>2</label>
    </ligand>
</feature>
<feature type="binding site" evidence="1">
    <location>
        <position position="206"/>
    </location>
    <ligand>
        <name>substrate</name>
    </ligand>
</feature>
<feature type="binding site" evidence="1">
    <location>
        <position position="239"/>
    </location>
    <ligand>
        <name>substrate</name>
    </ligand>
</feature>
<feature type="binding site" evidence="1">
    <location>
        <begin position="257"/>
        <end position="259"/>
    </location>
    <ligand>
        <name>substrate</name>
    </ligand>
</feature>
<feature type="binding site" evidence="1">
    <location>
        <position position="269"/>
    </location>
    <ligand>
        <name>substrate</name>
    </ligand>
</feature>
<feature type="binding site" evidence="1">
    <location>
        <position position="275"/>
    </location>
    <ligand>
        <name>Mg(2+)</name>
        <dbReference type="ChEBI" id="CHEBI:18420"/>
        <label>2</label>
    </ligand>
</feature>
<dbReference type="EC" id="3.1.3.11" evidence="1"/>
<dbReference type="EMBL" id="AE014075">
    <property type="protein sequence ID" value="AAN83750.1"/>
    <property type="status" value="ALT_INIT"/>
    <property type="molecule type" value="Genomic_DNA"/>
</dbReference>
<dbReference type="RefSeq" id="WP_000853753.1">
    <property type="nucleotide sequence ID" value="NZ_CP051263.1"/>
</dbReference>
<dbReference type="SMR" id="P0A994"/>
<dbReference type="STRING" id="199310.c5329"/>
<dbReference type="GeneID" id="86861371"/>
<dbReference type="KEGG" id="ecc:c5329"/>
<dbReference type="eggNOG" id="COG0158">
    <property type="taxonomic scope" value="Bacteria"/>
</dbReference>
<dbReference type="HOGENOM" id="CLU_039977_2_2_6"/>
<dbReference type="UniPathway" id="UPA00138"/>
<dbReference type="Proteomes" id="UP000001410">
    <property type="component" value="Chromosome"/>
</dbReference>
<dbReference type="GO" id="GO:0005829">
    <property type="term" value="C:cytosol"/>
    <property type="evidence" value="ECO:0007669"/>
    <property type="project" value="TreeGrafter"/>
</dbReference>
<dbReference type="GO" id="GO:0042132">
    <property type="term" value="F:fructose 1,6-bisphosphate 1-phosphatase activity"/>
    <property type="evidence" value="ECO:0007669"/>
    <property type="project" value="UniProtKB-UniRule"/>
</dbReference>
<dbReference type="GO" id="GO:0000287">
    <property type="term" value="F:magnesium ion binding"/>
    <property type="evidence" value="ECO:0007669"/>
    <property type="project" value="UniProtKB-UniRule"/>
</dbReference>
<dbReference type="GO" id="GO:0030388">
    <property type="term" value="P:fructose 1,6-bisphosphate metabolic process"/>
    <property type="evidence" value="ECO:0007669"/>
    <property type="project" value="TreeGrafter"/>
</dbReference>
<dbReference type="GO" id="GO:0006002">
    <property type="term" value="P:fructose 6-phosphate metabolic process"/>
    <property type="evidence" value="ECO:0007669"/>
    <property type="project" value="TreeGrafter"/>
</dbReference>
<dbReference type="GO" id="GO:0006000">
    <property type="term" value="P:fructose metabolic process"/>
    <property type="evidence" value="ECO:0007669"/>
    <property type="project" value="TreeGrafter"/>
</dbReference>
<dbReference type="GO" id="GO:0006094">
    <property type="term" value="P:gluconeogenesis"/>
    <property type="evidence" value="ECO:0007669"/>
    <property type="project" value="UniProtKB-UniRule"/>
</dbReference>
<dbReference type="GO" id="GO:0005986">
    <property type="term" value="P:sucrose biosynthetic process"/>
    <property type="evidence" value="ECO:0007669"/>
    <property type="project" value="TreeGrafter"/>
</dbReference>
<dbReference type="CDD" id="cd00354">
    <property type="entry name" value="FBPase"/>
    <property type="match status" value="1"/>
</dbReference>
<dbReference type="FunFam" id="3.30.540.10:FF:000002">
    <property type="entry name" value="Fructose-1,6-bisphosphatase class 1"/>
    <property type="match status" value="1"/>
</dbReference>
<dbReference type="FunFam" id="3.40.190.80:FF:000001">
    <property type="entry name" value="Fructose-1,6-bisphosphatase class 1"/>
    <property type="match status" value="1"/>
</dbReference>
<dbReference type="Gene3D" id="3.40.190.80">
    <property type="match status" value="1"/>
</dbReference>
<dbReference type="Gene3D" id="3.30.540.10">
    <property type="entry name" value="Fructose-1,6-Bisphosphatase, subunit A, domain 1"/>
    <property type="match status" value="1"/>
</dbReference>
<dbReference type="HAMAP" id="MF_01855">
    <property type="entry name" value="FBPase_class1"/>
    <property type="match status" value="1"/>
</dbReference>
<dbReference type="InterPro" id="IPR044015">
    <property type="entry name" value="FBPase_C_dom"/>
</dbReference>
<dbReference type="InterPro" id="IPR000146">
    <property type="entry name" value="FBPase_class-1"/>
</dbReference>
<dbReference type="InterPro" id="IPR033391">
    <property type="entry name" value="FBPase_N"/>
</dbReference>
<dbReference type="InterPro" id="IPR028343">
    <property type="entry name" value="FBPtase"/>
</dbReference>
<dbReference type="InterPro" id="IPR020548">
    <property type="entry name" value="Fructose_bisphosphatase_AS"/>
</dbReference>
<dbReference type="NCBIfam" id="NF006778">
    <property type="entry name" value="PRK09293.1-1"/>
    <property type="match status" value="1"/>
</dbReference>
<dbReference type="NCBIfam" id="NF006779">
    <property type="entry name" value="PRK09293.1-3"/>
    <property type="match status" value="1"/>
</dbReference>
<dbReference type="PANTHER" id="PTHR11556">
    <property type="entry name" value="FRUCTOSE-1,6-BISPHOSPHATASE-RELATED"/>
    <property type="match status" value="1"/>
</dbReference>
<dbReference type="PANTHER" id="PTHR11556:SF35">
    <property type="entry name" value="SEDOHEPTULOSE-1,7-BISPHOSPHATASE, CHLOROPLASTIC"/>
    <property type="match status" value="1"/>
</dbReference>
<dbReference type="Pfam" id="PF00316">
    <property type="entry name" value="FBPase"/>
    <property type="match status" value="1"/>
</dbReference>
<dbReference type="Pfam" id="PF18913">
    <property type="entry name" value="FBPase_C"/>
    <property type="match status" value="1"/>
</dbReference>
<dbReference type="PIRSF" id="PIRSF500210">
    <property type="entry name" value="FBPtase"/>
    <property type="match status" value="1"/>
</dbReference>
<dbReference type="PIRSF" id="PIRSF000904">
    <property type="entry name" value="FBPtase_SBPase"/>
    <property type="match status" value="1"/>
</dbReference>
<dbReference type="PRINTS" id="PR00115">
    <property type="entry name" value="F16BPHPHTASE"/>
</dbReference>
<dbReference type="SUPFAM" id="SSF56655">
    <property type="entry name" value="Carbohydrate phosphatase"/>
    <property type="match status" value="1"/>
</dbReference>
<dbReference type="PROSITE" id="PS00124">
    <property type="entry name" value="FBPASE"/>
    <property type="match status" value="1"/>
</dbReference>
<name>F16PA_ECOL6</name>